<gene>
    <name type="primary">ox</name>
    <name type="synonym">Qcr10</name>
    <name type="synonym">Qcr9</name>
    <name type="ORF">CG8764</name>
</gene>
<feature type="chain" id="PRO_0000193555" description="Cytochrome b-c1 complex subunit 9">
    <location>
        <begin position="1"/>
        <end position="55"/>
    </location>
</feature>
<feature type="topological domain" description="Mitochondrial matrix" evidence="1">
    <location>
        <begin position="1"/>
        <end position="15"/>
    </location>
</feature>
<feature type="transmembrane region" description="Helical" evidence="1">
    <location>
        <begin position="16"/>
        <end position="41"/>
    </location>
</feature>
<feature type="topological domain" description="Chloroplast intermembrane" evidence="1">
    <location>
        <begin position="42"/>
        <end position="55"/>
    </location>
</feature>
<keyword id="KW-0249">Electron transport</keyword>
<keyword id="KW-0472">Membrane</keyword>
<keyword id="KW-0496">Mitochondrion</keyword>
<keyword id="KW-0999">Mitochondrion inner membrane</keyword>
<keyword id="KW-1185">Reference proteome</keyword>
<keyword id="KW-0679">Respiratory chain</keyword>
<keyword id="KW-0812">Transmembrane</keyword>
<keyword id="KW-1133">Transmembrane helix</keyword>
<keyword id="KW-0813">Transport</keyword>
<organism>
    <name type="scientific">Drosophila melanogaster</name>
    <name type="common">Fruit fly</name>
    <dbReference type="NCBI Taxonomy" id="7227"/>
    <lineage>
        <taxon>Eukaryota</taxon>
        <taxon>Metazoa</taxon>
        <taxon>Ecdysozoa</taxon>
        <taxon>Arthropoda</taxon>
        <taxon>Hexapoda</taxon>
        <taxon>Insecta</taxon>
        <taxon>Pterygota</taxon>
        <taxon>Neoptera</taxon>
        <taxon>Endopterygota</taxon>
        <taxon>Diptera</taxon>
        <taxon>Brachycera</taxon>
        <taxon>Muscomorpha</taxon>
        <taxon>Ephydroidea</taxon>
        <taxon>Drosophilidae</taxon>
        <taxon>Drosophila</taxon>
        <taxon>Sophophora</taxon>
    </lineage>
</organism>
<dbReference type="EMBL" id="AF017783">
    <property type="protein sequence ID" value="AAD28637.1"/>
    <property type="molecule type" value="Genomic_DNA"/>
</dbReference>
<dbReference type="EMBL" id="AE013599">
    <property type="protein sequence ID" value="AAF58459.1"/>
    <property type="molecule type" value="Genomic_DNA"/>
</dbReference>
<dbReference type="RefSeq" id="NP_476985.1">
    <property type="nucleotide sequence ID" value="NM_057637.5"/>
</dbReference>
<dbReference type="SMR" id="Q9XY35"/>
<dbReference type="BioGRID" id="69656">
    <property type="interactions" value="34"/>
</dbReference>
<dbReference type="ComplexPortal" id="CPX-8730">
    <property type="entry name" value="Mitochondrial respiratory chain complex III"/>
</dbReference>
<dbReference type="ComplexPortal" id="CPX-8737">
    <property type="entry name" value="Mitochondrial respiratory chain complex III, testis-specific variant"/>
</dbReference>
<dbReference type="DIP" id="DIP-23798N"/>
<dbReference type="FunCoup" id="Q9XY35">
    <property type="interactions" value="644"/>
</dbReference>
<dbReference type="IntAct" id="Q9XY35">
    <property type="interactions" value="20"/>
</dbReference>
<dbReference type="STRING" id="7227.FBpp0086974"/>
<dbReference type="PaxDb" id="7227-FBpp0086974"/>
<dbReference type="DNASU" id="45401"/>
<dbReference type="EnsemblMetazoa" id="FBtr0087861">
    <property type="protein sequence ID" value="FBpp0086974"/>
    <property type="gene ID" value="FBgn0011227"/>
</dbReference>
<dbReference type="GeneID" id="45401"/>
<dbReference type="KEGG" id="dme:Dmel_CG8764"/>
<dbReference type="AGR" id="FB:FBgn0011227"/>
<dbReference type="CTD" id="45401"/>
<dbReference type="FlyBase" id="FBgn0011227">
    <property type="gene designation" value="ox"/>
</dbReference>
<dbReference type="VEuPathDB" id="VectorBase:FBgn0011227"/>
<dbReference type="eggNOG" id="KOG3494">
    <property type="taxonomic scope" value="Eukaryota"/>
</dbReference>
<dbReference type="HOGENOM" id="CLU_171977_2_0_1"/>
<dbReference type="InParanoid" id="Q9XY35"/>
<dbReference type="OMA" id="IKHKYEV"/>
<dbReference type="OrthoDB" id="44067at2759"/>
<dbReference type="PhylomeDB" id="Q9XY35"/>
<dbReference type="Reactome" id="R-DME-611105">
    <property type="pathway name" value="Respiratory electron transport"/>
</dbReference>
<dbReference type="Reactome" id="R-DME-9865881">
    <property type="pathway name" value="Complex III assembly"/>
</dbReference>
<dbReference type="BioGRID-ORCS" id="45401">
    <property type="hits" value="0 hits in 1 CRISPR screen"/>
</dbReference>
<dbReference type="GenomeRNAi" id="45401"/>
<dbReference type="PRO" id="PR:Q9XY35"/>
<dbReference type="Proteomes" id="UP000000803">
    <property type="component" value="Chromosome 2R"/>
</dbReference>
<dbReference type="Bgee" id="FBgn0011227">
    <property type="expression patterns" value="Expressed in second segment of antenna (Drosophila) and 286 other cell types or tissues"/>
</dbReference>
<dbReference type="ExpressionAtlas" id="Q9XY35">
    <property type="expression patterns" value="baseline and differential"/>
</dbReference>
<dbReference type="GO" id="GO:0005743">
    <property type="term" value="C:mitochondrial inner membrane"/>
    <property type="evidence" value="ECO:0000250"/>
    <property type="project" value="FlyBase"/>
</dbReference>
<dbReference type="GO" id="GO:0045275">
    <property type="term" value="C:respiratory chain complex III"/>
    <property type="evidence" value="ECO:0000250"/>
    <property type="project" value="FlyBase"/>
</dbReference>
<dbReference type="GO" id="GO:0006122">
    <property type="term" value="P:mitochondrial electron transport, ubiquinol to cytochrome c"/>
    <property type="evidence" value="ECO:0000250"/>
    <property type="project" value="FlyBase"/>
</dbReference>
<dbReference type="FunFam" id="1.20.5.260:FF:000001">
    <property type="entry name" value="Cytochrome b-c1 complex subunit 9"/>
    <property type="match status" value="1"/>
</dbReference>
<dbReference type="Gene3D" id="1.20.5.260">
    <property type="entry name" value="Cytochrome b-c1 complex subunit 9"/>
    <property type="match status" value="1"/>
</dbReference>
<dbReference type="InterPro" id="IPR008027">
    <property type="entry name" value="QCR9"/>
</dbReference>
<dbReference type="InterPro" id="IPR036656">
    <property type="entry name" value="QCR9_sf"/>
</dbReference>
<dbReference type="PANTHER" id="PTHR12980:SF0">
    <property type="entry name" value="CYTOCHROME B-C1 COMPLEX SUBUNIT 9"/>
    <property type="match status" value="1"/>
</dbReference>
<dbReference type="PANTHER" id="PTHR12980">
    <property type="entry name" value="UBIQUINOL-CYTOCHROME C REDUCTASE COMPLEX, SUBUNIT X"/>
    <property type="match status" value="1"/>
</dbReference>
<dbReference type="Pfam" id="PF05365">
    <property type="entry name" value="UCR_UQCRX_QCR9"/>
    <property type="match status" value="1"/>
</dbReference>
<dbReference type="SUPFAM" id="SSF81514">
    <property type="entry name" value="Subunit X (non-heme 7 kDa protein) of cytochrome bc1 complex (Ubiquinol-cytochrome c reductase)"/>
    <property type="match status" value="1"/>
</dbReference>
<evidence type="ECO:0000250" key="1">
    <source>
        <dbReference type="UniProtKB" id="P22289"/>
    </source>
</evidence>
<evidence type="ECO:0000305" key="2"/>
<reference key="1">
    <citation type="submission" date="1999-05" db="EMBL/GenBank/DDBJ databases">
        <title>The oxen gene is a modifier of gene expression in Drosophila.</title>
        <authorList>
            <person name="Benevolenskaya E.V."/>
            <person name="Frolov M.V."/>
            <person name="Birchler J.A."/>
        </authorList>
    </citation>
    <scope>NUCLEOTIDE SEQUENCE [GENOMIC DNA]</scope>
</reference>
<reference key="2">
    <citation type="journal article" date="2000" name="Science">
        <title>The genome sequence of Drosophila melanogaster.</title>
        <authorList>
            <person name="Adams M.D."/>
            <person name="Celniker S.E."/>
            <person name="Holt R.A."/>
            <person name="Evans C.A."/>
            <person name="Gocayne J.D."/>
            <person name="Amanatides P.G."/>
            <person name="Scherer S.E."/>
            <person name="Li P.W."/>
            <person name="Hoskins R.A."/>
            <person name="Galle R.F."/>
            <person name="George R.A."/>
            <person name="Lewis S.E."/>
            <person name="Richards S."/>
            <person name="Ashburner M."/>
            <person name="Henderson S.N."/>
            <person name="Sutton G.G."/>
            <person name="Wortman J.R."/>
            <person name="Yandell M.D."/>
            <person name="Zhang Q."/>
            <person name="Chen L.X."/>
            <person name="Brandon R.C."/>
            <person name="Rogers Y.-H.C."/>
            <person name="Blazej R.G."/>
            <person name="Champe M."/>
            <person name="Pfeiffer B.D."/>
            <person name="Wan K.H."/>
            <person name="Doyle C."/>
            <person name="Baxter E.G."/>
            <person name="Helt G."/>
            <person name="Nelson C.R."/>
            <person name="Miklos G.L.G."/>
            <person name="Abril J.F."/>
            <person name="Agbayani A."/>
            <person name="An H.-J."/>
            <person name="Andrews-Pfannkoch C."/>
            <person name="Baldwin D."/>
            <person name="Ballew R.M."/>
            <person name="Basu A."/>
            <person name="Baxendale J."/>
            <person name="Bayraktaroglu L."/>
            <person name="Beasley E.M."/>
            <person name="Beeson K.Y."/>
            <person name="Benos P.V."/>
            <person name="Berman B.P."/>
            <person name="Bhandari D."/>
            <person name="Bolshakov S."/>
            <person name="Borkova D."/>
            <person name="Botchan M.R."/>
            <person name="Bouck J."/>
            <person name="Brokstein P."/>
            <person name="Brottier P."/>
            <person name="Burtis K.C."/>
            <person name="Busam D.A."/>
            <person name="Butler H."/>
            <person name="Cadieu E."/>
            <person name="Center A."/>
            <person name="Chandra I."/>
            <person name="Cherry J.M."/>
            <person name="Cawley S."/>
            <person name="Dahlke C."/>
            <person name="Davenport L.B."/>
            <person name="Davies P."/>
            <person name="de Pablos B."/>
            <person name="Delcher A."/>
            <person name="Deng Z."/>
            <person name="Mays A.D."/>
            <person name="Dew I."/>
            <person name="Dietz S.M."/>
            <person name="Dodson K."/>
            <person name="Doup L.E."/>
            <person name="Downes M."/>
            <person name="Dugan-Rocha S."/>
            <person name="Dunkov B.C."/>
            <person name="Dunn P."/>
            <person name="Durbin K.J."/>
            <person name="Evangelista C.C."/>
            <person name="Ferraz C."/>
            <person name="Ferriera S."/>
            <person name="Fleischmann W."/>
            <person name="Fosler C."/>
            <person name="Gabrielian A.E."/>
            <person name="Garg N.S."/>
            <person name="Gelbart W.M."/>
            <person name="Glasser K."/>
            <person name="Glodek A."/>
            <person name="Gong F."/>
            <person name="Gorrell J.H."/>
            <person name="Gu Z."/>
            <person name="Guan P."/>
            <person name="Harris M."/>
            <person name="Harris N.L."/>
            <person name="Harvey D.A."/>
            <person name="Heiman T.J."/>
            <person name="Hernandez J.R."/>
            <person name="Houck J."/>
            <person name="Hostin D."/>
            <person name="Houston K.A."/>
            <person name="Howland T.J."/>
            <person name="Wei M.-H."/>
            <person name="Ibegwam C."/>
            <person name="Jalali M."/>
            <person name="Kalush F."/>
            <person name="Karpen G.H."/>
            <person name="Ke Z."/>
            <person name="Kennison J.A."/>
            <person name="Ketchum K.A."/>
            <person name="Kimmel B.E."/>
            <person name="Kodira C.D."/>
            <person name="Kraft C.L."/>
            <person name="Kravitz S."/>
            <person name="Kulp D."/>
            <person name="Lai Z."/>
            <person name="Lasko P."/>
            <person name="Lei Y."/>
            <person name="Levitsky A.A."/>
            <person name="Li J.H."/>
            <person name="Li Z."/>
            <person name="Liang Y."/>
            <person name="Lin X."/>
            <person name="Liu X."/>
            <person name="Mattei B."/>
            <person name="McIntosh T.C."/>
            <person name="McLeod M.P."/>
            <person name="McPherson D."/>
            <person name="Merkulov G."/>
            <person name="Milshina N.V."/>
            <person name="Mobarry C."/>
            <person name="Morris J."/>
            <person name="Moshrefi A."/>
            <person name="Mount S.M."/>
            <person name="Moy M."/>
            <person name="Murphy B."/>
            <person name="Murphy L."/>
            <person name="Muzny D.M."/>
            <person name="Nelson D.L."/>
            <person name="Nelson D.R."/>
            <person name="Nelson K.A."/>
            <person name="Nixon K."/>
            <person name="Nusskern D.R."/>
            <person name="Pacleb J.M."/>
            <person name="Palazzolo M."/>
            <person name="Pittman G.S."/>
            <person name="Pan S."/>
            <person name="Pollard J."/>
            <person name="Puri V."/>
            <person name="Reese M.G."/>
            <person name="Reinert K."/>
            <person name="Remington K."/>
            <person name="Saunders R.D.C."/>
            <person name="Scheeler F."/>
            <person name="Shen H."/>
            <person name="Shue B.C."/>
            <person name="Siden-Kiamos I."/>
            <person name="Simpson M."/>
            <person name="Skupski M.P."/>
            <person name="Smith T.J."/>
            <person name="Spier E."/>
            <person name="Spradling A.C."/>
            <person name="Stapleton M."/>
            <person name="Strong R."/>
            <person name="Sun E."/>
            <person name="Svirskas R."/>
            <person name="Tector C."/>
            <person name="Turner R."/>
            <person name="Venter E."/>
            <person name="Wang A.H."/>
            <person name="Wang X."/>
            <person name="Wang Z.-Y."/>
            <person name="Wassarman D.A."/>
            <person name="Weinstock G.M."/>
            <person name="Weissenbach J."/>
            <person name="Williams S.M."/>
            <person name="Woodage T."/>
            <person name="Worley K.C."/>
            <person name="Wu D."/>
            <person name="Yang S."/>
            <person name="Yao Q.A."/>
            <person name="Ye J."/>
            <person name="Yeh R.-F."/>
            <person name="Zaveri J.S."/>
            <person name="Zhan M."/>
            <person name="Zhang G."/>
            <person name="Zhao Q."/>
            <person name="Zheng L."/>
            <person name="Zheng X.H."/>
            <person name="Zhong F.N."/>
            <person name="Zhong W."/>
            <person name="Zhou X."/>
            <person name="Zhu S.C."/>
            <person name="Zhu X."/>
            <person name="Smith H.O."/>
            <person name="Gibbs R.A."/>
            <person name="Myers E.W."/>
            <person name="Rubin G.M."/>
            <person name="Venter J.C."/>
        </authorList>
    </citation>
    <scope>NUCLEOTIDE SEQUENCE [LARGE SCALE GENOMIC DNA]</scope>
    <source>
        <strain>Berkeley</strain>
    </source>
</reference>
<reference key="3">
    <citation type="journal article" date="2002" name="Genome Biol.">
        <title>Annotation of the Drosophila melanogaster euchromatic genome: a systematic review.</title>
        <authorList>
            <person name="Misra S."/>
            <person name="Crosby M.A."/>
            <person name="Mungall C.J."/>
            <person name="Matthews B.B."/>
            <person name="Campbell K.S."/>
            <person name="Hradecky P."/>
            <person name="Huang Y."/>
            <person name="Kaminker J.S."/>
            <person name="Millburn G.H."/>
            <person name="Prochnik S.E."/>
            <person name="Smith C.D."/>
            <person name="Tupy J.L."/>
            <person name="Whitfield E.J."/>
            <person name="Bayraktaroglu L."/>
            <person name="Berman B.P."/>
            <person name="Bettencourt B.R."/>
            <person name="Celniker S.E."/>
            <person name="de Grey A.D.N.J."/>
            <person name="Drysdale R.A."/>
            <person name="Harris N.L."/>
            <person name="Richter J."/>
            <person name="Russo S."/>
            <person name="Schroeder A.J."/>
            <person name="Shu S.Q."/>
            <person name="Stapleton M."/>
            <person name="Yamada C."/>
            <person name="Ashburner M."/>
            <person name="Gelbart W.M."/>
            <person name="Rubin G.M."/>
            <person name="Lewis S.E."/>
        </authorList>
    </citation>
    <scope>GENOME REANNOTATION</scope>
    <source>
        <strain>Berkeley</strain>
    </source>
</reference>
<accession>Q9XY35</accession>
<protein>
    <recommendedName>
        <fullName>Cytochrome b-c1 complex subunit 9</fullName>
    </recommendedName>
    <alternativeName>
        <fullName>Complex III subunit 9</fullName>
    </alternativeName>
    <alternativeName>
        <fullName>Complex III subunit X</fullName>
    </alternativeName>
    <alternativeName>
        <fullName>Protein oxen</fullName>
    </alternativeName>
    <alternativeName>
        <fullName>Ubiquinol-cytochrome c reductase complex 6.3 kDa protein</fullName>
    </alternativeName>
</protein>
<name>QCR9_DROME</name>
<comment type="function">
    <text evidence="1">Component of the ubiquinol-cytochrome c oxidoreductase, a multisubunit transmembrane complex that is part of the mitochondrial electron transport chain which drives oxidative phosphorylation. The respiratory chain contains 3 multisubunit complexes succinate dehydrogenase (complex II, CII), ubiquinol-cytochrome c oxidoreductase (cytochrome b-c1 complex, complex III, CIII) and cytochrome c oxidase (complex IV, CIV), that cooperate to transfer electrons derived from NADH and succinate to molecular oxygen, creating an electrochemical gradient over the inner membrane that drives transmembrane transport and the ATP synthase. The cytochrome b-c1 complex catalyzes electron transfer from ubiquinol to cytochrome c, linking this redox reaction to translocation of protons across the mitochondrial inner membrane, with protons being carried across the membrane as hydrogens on the quinol. In the process called Q cycle, 2 protons are consumed from the matrix, 4 protons are released into the intermembrane space and 2 electrons are passed to cytochrome c.</text>
</comment>
<comment type="subunit">
    <text evidence="1">Component of the ubiquinol-cytochrome c oxidoreductase (cytochrome b-c1 complex, complex III, CIII), a multisubunit enzyme composed of 3 respiratory subunits cytochrome b, cytochrome c1 and Rieske protein, 2 core protein subunits, and additional low-molecular weight protein subunits. The complex exists as an obligatory dimer and forms supercomplexes (SCs) in the inner mitochondrial membrane with cytochrome c oxidase (complex IV, CIV).</text>
</comment>
<comment type="subcellular location">
    <subcellularLocation>
        <location evidence="1">Mitochondrion inner membrane</location>
        <topology evidence="1">Single-pass membrane protein</topology>
    </subcellularLocation>
</comment>
<comment type="similarity">
    <text evidence="2">Belongs to the UQCR10/QCR9 family.</text>
</comment>
<sequence length="55" mass="6294">MKVIYNTLFKRTSTYAVAIIASAFFFERALDVTSVAIFEGINKGKLWKDIKGKYE</sequence>
<proteinExistence type="inferred from homology"/>